<comment type="function">
    <text evidence="1">This protein is involved in the repair of mismatches in DNA. It is possible that it carries out the mismatch recognition step. This protein has a weak ATPase activity.</text>
</comment>
<comment type="similarity">
    <text evidence="1">Belongs to the DNA mismatch repair MutS family.</text>
</comment>
<accession>Q6GHE0</accession>
<reference key="1">
    <citation type="journal article" date="2004" name="Proc. Natl. Acad. Sci. U.S.A.">
        <title>Complete genomes of two clinical Staphylococcus aureus strains: evidence for the rapid evolution of virulence and drug resistance.</title>
        <authorList>
            <person name="Holden M.T.G."/>
            <person name="Feil E.J."/>
            <person name="Lindsay J.A."/>
            <person name="Peacock S.J."/>
            <person name="Day N.P.J."/>
            <person name="Enright M.C."/>
            <person name="Foster T.J."/>
            <person name="Moore C.E."/>
            <person name="Hurst L."/>
            <person name="Atkin R."/>
            <person name="Barron A."/>
            <person name="Bason N."/>
            <person name="Bentley S.D."/>
            <person name="Chillingworth C."/>
            <person name="Chillingworth T."/>
            <person name="Churcher C."/>
            <person name="Clark L."/>
            <person name="Corton C."/>
            <person name="Cronin A."/>
            <person name="Doggett J."/>
            <person name="Dowd L."/>
            <person name="Feltwell T."/>
            <person name="Hance Z."/>
            <person name="Harris B."/>
            <person name="Hauser H."/>
            <person name="Holroyd S."/>
            <person name="Jagels K."/>
            <person name="James K.D."/>
            <person name="Lennard N."/>
            <person name="Line A."/>
            <person name="Mayes R."/>
            <person name="Moule S."/>
            <person name="Mungall K."/>
            <person name="Ormond D."/>
            <person name="Quail M.A."/>
            <person name="Rabbinowitsch E."/>
            <person name="Rutherford K.M."/>
            <person name="Sanders M."/>
            <person name="Sharp S."/>
            <person name="Simmonds M."/>
            <person name="Stevens K."/>
            <person name="Whitehead S."/>
            <person name="Barrell B.G."/>
            <person name="Spratt B.G."/>
            <person name="Parkhill J."/>
        </authorList>
    </citation>
    <scope>NUCLEOTIDE SEQUENCE [LARGE SCALE GENOMIC DNA]</scope>
    <source>
        <strain>MRSA252</strain>
    </source>
</reference>
<sequence>MSNVTPMMQQYLKIKSEYQDCLLFFRLGDFYEMFYEDAKEASRVLEITLTKRDAKKENPIPMCGVPYHSADSYIDTLVNNGYKVAICEQMEDPKQTKGMVRREVVRIVTPGTVMEQGGVDDKQNNYILSFVMNQPEIALSYCDVSTGELKVTHFNDEATLLNEITTINPNEVVINDNISDHLKRQINMVTETITVRETLSSEIYSVNQTEHKLMYQATQLLLDYIHHTQKRDLSHIEDAVQYAAIDYMKMDFYAKRNLELTESIRLKSKKGTLLWLMDETKTPMGARRLKQWIDRPLISKEQIEARLDIVDEFSAHFIERDTLRTYLNQVYDIERLVGRVSYGNVNARDLIQLKHSISEIPNIKALLNSMNQDTLVQVNQLEPLDDLLDILEQSLVEEPPISVKDGGLFKVGFNMQLDEYLEASKNGKTWLAELQAKERQRTGIKSLKISFNKVFGYFIEITRANLQNFEPSEFGYMRKQTLSNAERFITDELKEKEDIILGAEDKAIELEYQLFVQLREEVKKYTERLQHQAKIISELDCLQSFAEIAQKYNYTRPSFSENKTLELVESRHPVVERVMDYNDYVPNNCRLDNETFIYLITGPNMSGKSTYMRQVAIISIMAQMGAYVPCKEAVLPIFDQIFTRIGAADDLVSGKSTFMVEMLEAQKALTYATEDSLIIFDEIGRGTSTYDGLALAQAMIEYVAETSHAKTLFSTHYHELTTLDQALPSLKNVHVAANEYKGELIFLHKVKDGAVDDSYGIQVAKLADLPEKVISRAQVILSEFEASAGKKSSISNLKMVENEPEINQENSNLSVEETTDTLSQKDFEQASFDLFENDQESEIELQIKNLNLSNMTPIEALVKLSELQNQLK</sequence>
<gene>
    <name evidence="1" type="primary">mutS</name>
    <name type="ordered locus">SAR1271</name>
</gene>
<protein>
    <recommendedName>
        <fullName evidence="1">DNA mismatch repair protein MutS</fullName>
    </recommendedName>
</protein>
<organism>
    <name type="scientific">Staphylococcus aureus (strain MRSA252)</name>
    <dbReference type="NCBI Taxonomy" id="282458"/>
    <lineage>
        <taxon>Bacteria</taxon>
        <taxon>Bacillati</taxon>
        <taxon>Bacillota</taxon>
        <taxon>Bacilli</taxon>
        <taxon>Bacillales</taxon>
        <taxon>Staphylococcaceae</taxon>
        <taxon>Staphylococcus</taxon>
    </lineage>
</organism>
<name>MUTS_STAAR</name>
<keyword id="KW-0067">ATP-binding</keyword>
<keyword id="KW-0227">DNA damage</keyword>
<keyword id="KW-0234">DNA repair</keyword>
<keyword id="KW-0238">DNA-binding</keyword>
<keyword id="KW-0547">Nucleotide-binding</keyword>
<proteinExistence type="inferred from homology"/>
<feature type="chain" id="PRO_0000115137" description="DNA mismatch repair protein MutS">
    <location>
        <begin position="1"/>
        <end position="872"/>
    </location>
</feature>
<feature type="binding site" evidence="1">
    <location>
        <begin position="602"/>
        <end position="609"/>
    </location>
    <ligand>
        <name>ATP</name>
        <dbReference type="ChEBI" id="CHEBI:30616"/>
    </ligand>
</feature>
<evidence type="ECO:0000255" key="1">
    <source>
        <dbReference type="HAMAP-Rule" id="MF_00096"/>
    </source>
</evidence>
<dbReference type="EMBL" id="BX571856">
    <property type="protein sequence ID" value="CAG40273.1"/>
    <property type="molecule type" value="Genomic_DNA"/>
</dbReference>
<dbReference type="RefSeq" id="WP_000073334.1">
    <property type="nucleotide sequence ID" value="NC_002952.2"/>
</dbReference>
<dbReference type="SMR" id="Q6GHE0"/>
<dbReference type="KEGG" id="sar:SAR1271"/>
<dbReference type="HOGENOM" id="CLU_002472_4_0_9"/>
<dbReference type="Proteomes" id="UP000000596">
    <property type="component" value="Chromosome"/>
</dbReference>
<dbReference type="GO" id="GO:0005829">
    <property type="term" value="C:cytosol"/>
    <property type="evidence" value="ECO:0007669"/>
    <property type="project" value="TreeGrafter"/>
</dbReference>
<dbReference type="GO" id="GO:0005524">
    <property type="term" value="F:ATP binding"/>
    <property type="evidence" value="ECO:0007669"/>
    <property type="project" value="UniProtKB-UniRule"/>
</dbReference>
<dbReference type="GO" id="GO:0140664">
    <property type="term" value="F:ATP-dependent DNA damage sensor activity"/>
    <property type="evidence" value="ECO:0007669"/>
    <property type="project" value="InterPro"/>
</dbReference>
<dbReference type="GO" id="GO:0003684">
    <property type="term" value="F:damaged DNA binding"/>
    <property type="evidence" value="ECO:0007669"/>
    <property type="project" value="UniProtKB-UniRule"/>
</dbReference>
<dbReference type="GO" id="GO:0030983">
    <property type="term" value="F:mismatched DNA binding"/>
    <property type="evidence" value="ECO:0007669"/>
    <property type="project" value="InterPro"/>
</dbReference>
<dbReference type="GO" id="GO:0006298">
    <property type="term" value="P:mismatch repair"/>
    <property type="evidence" value="ECO:0007669"/>
    <property type="project" value="UniProtKB-UniRule"/>
</dbReference>
<dbReference type="CDD" id="cd03284">
    <property type="entry name" value="ABC_MutS1"/>
    <property type="match status" value="1"/>
</dbReference>
<dbReference type="FunFam" id="1.10.1420.10:FF:000007">
    <property type="entry name" value="DNA mismatch repair protein MutS"/>
    <property type="match status" value="1"/>
</dbReference>
<dbReference type="FunFam" id="3.40.1170.10:FF:000001">
    <property type="entry name" value="DNA mismatch repair protein MutS"/>
    <property type="match status" value="1"/>
</dbReference>
<dbReference type="FunFam" id="3.40.50.300:FF:000896">
    <property type="entry name" value="DNA mismatch repair protein MutS"/>
    <property type="match status" value="1"/>
</dbReference>
<dbReference type="Gene3D" id="1.10.1420.10">
    <property type="match status" value="2"/>
</dbReference>
<dbReference type="Gene3D" id="3.40.1170.10">
    <property type="entry name" value="DNA repair protein MutS, domain I"/>
    <property type="match status" value="1"/>
</dbReference>
<dbReference type="Gene3D" id="3.30.420.110">
    <property type="entry name" value="MutS, connector domain"/>
    <property type="match status" value="1"/>
</dbReference>
<dbReference type="Gene3D" id="3.40.50.300">
    <property type="entry name" value="P-loop containing nucleotide triphosphate hydrolases"/>
    <property type="match status" value="1"/>
</dbReference>
<dbReference type="HAMAP" id="MF_00096">
    <property type="entry name" value="MutS"/>
    <property type="match status" value="1"/>
</dbReference>
<dbReference type="InterPro" id="IPR005748">
    <property type="entry name" value="DNA_mismatch_repair_MutS"/>
</dbReference>
<dbReference type="InterPro" id="IPR007695">
    <property type="entry name" value="DNA_mismatch_repair_MutS-lik_N"/>
</dbReference>
<dbReference type="InterPro" id="IPR017261">
    <property type="entry name" value="DNA_mismatch_repair_MutS/MSH"/>
</dbReference>
<dbReference type="InterPro" id="IPR000432">
    <property type="entry name" value="DNA_mismatch_repair_MutS_C"/>
</dbReference>
<dbReference type="InterPro" id="IPR007861">
    <property type="entry name" value="DNA_mismatch_repair_MutS_clamp"/>
</dbReference>
<dbReference type="InterPro" id="IPR007696">
    <property type="entry name" value="DNA_mismatch_repair_MutS_core"/>
</dbReference>
<dbReference type="InterPro" id="IPR016151">
    <property type="entry name" value="DNA_mismatch_repair_MutS_N"/>
</dbReference>
<dbReference type="InterPro" id="IPR036187">
    <property type="entry name" value="DNA_mismatch_repair_MutS_sf"/>
</dbReference>
<dbReference type="InterPro" id="IPR007860">
    <property type="entry name" value="DNA_mmatch_repair_MutS_con_dom"/>
</dbReference>
<dbReference type="InterPro" id="IPR045076">
    <property type="entry name" value="MutS"/>
</dbReference>
<dbReference type="InterPro" id="IPR036678">
    <property type="entry name" value="MutS_con_dom_sf"/>
</dbReference>
<dbReference type="InterPro" id="IPR027417">
    <property type="entry name" value="P-loop_NTPase"/>
</dbReference>
<dbReference type="NCBIfam" id="TIGR01070">
    <property type="entry name" value="mutS1"/>
    <property type="match status" value="1"/>
</dbReference>
<dbReference type="NCBIfam" id="NF003810">
    <property type="entry name" value="PRK05399.1"/>
    <property type="match status" value="1"/>
</dbReference>
<dbReference type="PANTHER" id="PTHR11361:SF34">
    <property type="entry name" value="DNA MISMATCH REPAIR PROTEIN MSH1, MITOCHONDRIAL"/>
    <property type="match status" value="1"/>
</dbReference>
<dbReference type="PANTHER" id="PTHR11361">
    <property type="entry name" value="DNA MISMATCH REPAIR PROTEIN MUTS FAMILY MEMBER"/>
    <property type="match status" value="1"/>
</dbReference>
<dbReference type="Pfam" id="PF01624">
    <property type="entry name" value="MutS_I"/>
    <property type="match status" value="1"/>
</dbReference>
<dbReference type="Pfam" id="PF05188">
    <property type="entry name" value="MutS_II"/>
    <property type="match status" value="1"/>
</dbReference>
<dbReference type="Pfam" id="PF05192">
    <property type="entry name" value="MutS_III"/>
    <property type="match status" value="1"/>
</dbReference>
<dbReference type="Pfam" id="PF05190">
    <property type="entry name" value="MutS_IV"/>
    <property type="match status" value="1"/>
</dbReference>
<dbReference type="Pfam" id="PF00488">
    <property type="entry name" value="MutS_V"/>
    <property type="match status" value="1"/>
</dbReference>
<dbReference type="PIRSF" id="PIRSF037677">
    <property type="entry name" value="DNA_mis_repair_Msh6"/>
    <property type="match status" value="1"/>
</dbReference>
<dbReference type="SMART" id="SM00534">
    <property type="entry name" value="MUTSac"/>
    <property type="match status" value="1"/>
</dbReference>
<dbReference type="SMART" id="SM00533">
    <property type="entry name" value="MUTSd"/>
    <property type="match status" value="1"/>
</dbReference>
<dbReference type="SUPFAM" id="SSF55271">
    <property type="entry name" value="DNA repair protein MutS, domain I"/>
    <property type="match status" value="1"/>
</dbReference>
<dbReference type="SUPFAM" id="SSF53150">
    <property type="entry name" value="DNA repair protein MutS, domain II"/>
    <property type="match status" value="1"/>
</dbReference>
<dbReference type="SUPFAM" id="SSF48334">
    <property type="entry name" value="DNA repair protein MutS, domain III"/>
    <property type="match status" value="1"/>
</dbReference>
<dbReference type="SUPFAM" id="SSF52540">
    <property type="entry name" value="P-loop containing nucleoside triphosphate hydrolases"/>
    <property type="match status" value="1"/>
</dbReference>
<dbReference type="PROSITE" id="PS00486">
    <property type="entry name" value="DNA_MISMATCH_REPAIR_2"/>
    <property type="match status" value="1"/>
</dbReference>